<dbReference type="EMBL" id="L42023">
    <property type="protein sequence ID" value="AAC22450.1"/>
    <property type="molecule type" value="Genomic_DNA"/>
</dbReference>
<dbReference type="PIR" id="A64094">
    <property type="entry name" value="A64094"/>
</dbReference>
<dbReference type="RefSeq" id="NP_438951.1">
    <property type="nucleotide sequence ID" value="NC_000907.1"/>
</dbReference>
<dbReference type="SMR" id="P44377"/>
<dbReference type="STRING" id="71421.HI_0792"/>
<dbReference type="EnsemblBacteria" id="AAC22450">
    <property type="protein sequence ID" value="AAC22450"/>
    <property type="gene ID" value="HI_0792"/>
</dbReference>
<dbReference type="KEGG" id="hin:HI_0792"/>
<dbReference type="PATRIC" id="fig|71421.8.peg.831"/>
<dbReference type="eggNOG" id="COG0096">
    <property type="taxonomic scope" value="Bacteria"/>
</dbReference>
<dbReference type="HOGENOM" id="CLU_098428_0_0_6"/>
<dbReference type="OrthoDB" id="9802617at2"/>
<dbReference type="PhylomeDB" id="P44377"/>
<dbReference type="BioCyc" id="HINF71421:G1GJ1-832-MONOMER"/>
<dbReference type="PRO" id="PR:P44377"/>
<dbReference type="Proteomes" id="UP000000579">
    <property type="component" value="Chromosome"/>
</dbReference>
<dbReference type="GO" id="GO:0022627">
    <property type="term" value="C:cytosolic small ribosomal subunit"/>
    <property type="evidence" value="ECO:0000318"/>
    <property type="project" value="GO_Central"/>
</dbReference>
<dbReference type="GO" id="GO:0019843">
    <property type="term" value="F:rRNA binding"/>
    <property type="evidence" value="ECO:0007669"/>
    <property type="project" value="UniProtKB-UniRule"/>
</dbReference>
<dbReference type="GO" id="GO:0003735">
    <property type="term" value="F:structural constituent of ribosome"/>
    <property type="evidence" value="ECO:0000318"/>
    <property type="project" value="GO_Central"/>
</dbReference>
<dbReference type="GO" id="GO:0006412">
    <property type="term" value="P:translation"/>
    <property type="evidence" value="ECO:0007669"/>
    <property type="project" value="UniProtKB-UniRule"/>
</dbReference>
<dbReference type="FunFam" id="3.30.1370.30:FF:000003">
    <property type="entry name" value="30S ribosomal protein S8"/>
    <property type="match status" value="1"/>
</dbReference>
<dbReference type="FunFam" id="3.30.1490.10:FF:000001">
    <property type="entry name" value="30S ribosomal protein S8"/>
    <property type="match status" value="1"/>
</dbReference>
<dbReference type="Gene3D" id="3.30.1370.30">
    <property type="match status" value="1"/>
</dbReference>
<dbReference type="Gene3D" id="3.30.1490.10">
    <property type="match status" value="1"/>
</dbReference>
<dbReference type="HAMAP" id="MF_01302_B">
    <property type="entry name" value="Ribosomal_uS8_B"/>
    <property type="match status" value="1"/>
</dbReference>
<dbReference type="InterPro" id="IPR000630">
    <property type="entry name" value="Ribosomal_uS8"/>
</dbReference>
<dbReference type="InterPro" id="IPR047863">
    <property type="entry name" value="Ribosomal_uS8_CS"/>
</dbReference>
<dbReference type="InterPro" id="IPR035987">
    <property type="entry name" value="Ribosomal_uS8_sf"/>
</dbReference>
<dbReference type="NCBIfam" id="NF001109">
    <property type="entry name" value="PRK00136.1"/>
    <property type="match status" value="1"/>
</dbReference>
<dbReference type="PANTHER" id="PTHR11758">
    <property type="entry name" value="40S RIBOSOMAL PROTEIN S15A"/>
    <property type="match status" value="1"/>
</dbReference>
<dbReference type="Pfam" id="PF00410">
    <property type="entry name" value="Ribosomal_S8"/>
    <property type="match status" value="1"/>
</dbReference>
<dbReference type="SUPFAM" id="SSF56047">
    <property type="entry name" value="Ribosomal protein S8"/>
    <property type="match status" value="1"/>
</dbReference>
<dbReference type="PROSITE" id="PS00053">
    <property type="entry name" value="RIBOSOMAL_S8"/>
    <property type="match status" value="1"/>
</dbReference>
<sequence>MSMQDPIADMLTRIRNGQAANKVAINMPSSKLKVAIANVLAAEGYIESVKVLEGAKPELEITLKYFQGKPVVESIQRVSRPGLRIYKRKDELPKVMGGLGVAVISTSKGVMTDRAARQAGLGGEIICYVA</sequence>
<proteinExistence type="inferred from homology"/>
<protein>
    <recommendedName>
        <fullName evidence="2">Small ribosomal subunit protein uS8</fullName>
    </recommendedName>
    <alternativeName>
        <fullName evidence="3">30S ribosomal protein S8</fullName>
    </alternativeName>
</protein>
<name>RS8_HAEIN</name>
<keyword id="KW-1185">Reference proteome</keyword>
<keyword id="KW-0687">Ribonucleoprotein</keyword>
<keyword id="KW-0689">Ribosomal protein</keyword>
<keyword id="KW-0694">RNA-binding</keyword>
<keyword id="KW-0699">rRNA-binding</keyword>
<gene>
    <name evidence="2" type="primary">rpsH</name>
    <name evidence="2" type="synonym">rps8</name>
    <name type="ordered locus">HI_0792</name>
</gene>
<feature type="initiator methionine" description="Removed" evidence="1">
    <location>
        <position position="1"/>
    </location>
</feature>
<feature type="chain" id="PRO_0000126417" description="Small ribosomal subunit protein uS8">
    <location>
        <begin position="2"/>
        <end position="130"/>
    </location>
</feature>
<reference key="1">
    <citation type="journal article" date="1995" name="Science">
        <title>Whole-genome random sequencing and assembly of Haemophilus influenzae Rd.</title>
        <authorList>
            <person name="Fleischmann R.D."/>
            <person name="Adams M.D."/>
            <person name="White O."/>
            <person name="Clayton R.A."/>
            <person name="Kirkness E.F."/>
            <person name="Kerlavage A.R."/>
            <person name="Bult C.J."/>
            <person name="Tomb J.-F."/>
            <person name="Dougherty B.A."/>
            <person name="Merrick J.M."/>
            <person name="McKenney K."/>
            <person name="Sutton G.G."/>
            <person name="FitzHugh W."/>
            <person name="Fields C.A."/>
            <person name="Gocayne J.D."/>
            <person name="Scott J.D."/>
            <person name="Shirley R."/>
            <person name="Liu L.-I."/>
            <person name="Glodek A."/>
            <person name="Kelley J.M."/>
            <person name="Weidman J.F."/>
            <person name="Phillips C.A."/>
            <person name="Spriggs T."/>
            <person name="Hedblom E."/>
            <person name="Cotton M.D."/>
            <person name="Utterback T.R."/>
            <person name="Hanna M.C."/>
            <person name="Nguyen D.T."/>
            <person name="Saudek D.M."/>
            <person name="Brandon R.C."/>
            <person name="Fine L.D."/>
            <person name="Fritchman J.L."/>
            <person name="Fuhrmann J.L."/>
            <person name="Geoghagen N.S.M."/>
            <person name="Gnehm C.L."/>
            <person name="McDonald L.A."/>
            <person name="Small K.V."/>
            <person name="Fraser C.M."/>
            <person name="Smith H.O."/>
            <person name="Venter J.C."/>
        </authorList>
    </citation>
    <scope>NUCLEOTIDE SEQUENCE [LARGE SCALE GENOMIC DNA]</scope>
    <source>
        <strain>ATCC 51907 / DSM 11121 / KW20 / Rd</strain>
    </source>
</reference>
<accession>P44377</accession>
<comment type="function">
    <text evidence="2">One of the primary rRNA binding proteins, it binds directly to 16S rRNA central domain where it helps coordinate assembly of the platform of the 30S subunit.</text>
</comment>
<comment type="subunit">
    <text evidence="2">Part of the 30S ribosomal subunit. Contacts proteins S5 and S12.</text>
</comment>
<comment type="similarity">
    <text evidence="2">Belongs to the universal ribosomal protein uS8 family.</text>
</comment>
<organism>
    <name type="scientific">Haemophilus influenzae (strain ATCC 51907 / DSM 11121 / KW20 / Rd)</name>
    <dbReference type="NCBI Taxonomy" id="71421"/>
    <lineage>
        <taxon>Bacteria</taxon>
        <taxon>Pseudomonadati</taxon>
        <taxon>Pseudomonadota</taxon>
        <taxon>Gammaproteobacteria</taxon>
        <taxon>Pasteurellales</taxon>
        <taxon>Pasteurellaceae</taxon>
        <taxon>Haemophilus</taxon>
    </lineage>
</organism>
<evidence type="ECO:0000250" key="1"/>
<evidence type="ECO:0000255" key="2">
    <source>
        <dbReference type="HAMAP-Rule" id="MF_01302"/>
    </source>
</evidence>
<evidence type="ECO:0000305" key="3"/>